<name>NUSB_GEOSM</name>
<evidence type="ECO:0000255" key="1">
    <source>
        <dbReference type="HAMAP-Rule" id="MF_00073"/>
    </source>
</evidence>
<gene>
    <name evidence="1" type="primary">nusB</name>
    <name type="ordered locus">GM21_1230</name>
</gene>
<feature type="chain" id="PRO_1000202481" description="Transcription antitermination protein NusB">
    <location>
        <begin position="1"/>
        <end position="145"/>
    </location>
</feature>
<sequence>MTTRREGRELALQALYSKDLVLQDANSTLKRITESFSEGEEPTLSVNSKAYAFASELVNGVVSNLQQIDSRIAEKSKHWSMARMARVDLNILRLAVFELLYRPDIPKNVTMNEAIEVAKKFGADDSASFVNGILDEIASTVTDKE</sequence>
<dbReference type="EMBL" id="CP001661">
    <property type="protein sequence ID" value="ACT17291.1"/>
    <property type="molecule type" value="Genomic_DNA"/>
</dbReference>
<dbReference type="SMR" id="C6E3M6"/>
<dbReference type="STRING" id="443144.GM21_1230"/>
<dbReference type="KEGG" id="gem:GM21_1230"/>
<dbReference type="eggNOG" id="COG0781">
    <property type="taxonomic scope" value="Bacteria"/>
</dbReference>
<dbReference type="HOGENOM" id="CLU_087843_3_3_7"/>
<dbReference type="OrthoDB" id="9797817at2"/>
<dbReference type="GO" id="GO:0005829">
    <property type="term" value="C:cytosol"/>
    <property type="evidence" value="ECO:0007669"/>
    <property type="project" value="TreeGrafter"/>
</dbReference>
<dbReference type="GO" id="GO:0003723">
    <property type="term" value="F:RNA binding"/>
    <property type="evidence" value="ECO:0007669"/>
    <property type="project" value="UniProtKB-UniRule"/>
</dbReference>
<dbReference type="GO" id="GO:0006353">
    <property type="term" value="P:DNA-templated transcription termination"/>
    <property type="evidence" value="ECO:0007669"/>
    <property type="project" value="UniProtKB-UniRule"/>
</dbReference>
<dbReference type="GO" id="GO:0031564">
    <property type="term" value="P:transcription antitermination"/>
    <property type="evidence" value="ECO:0007669"/>
    <property type="project" value="UniProtKB-KW"/>
</dbReference>
<dbReference type="CDD" id="cd00619">
    <property type="entry name" value="Terminator_NusB"/>
    <property type="match status" value="1"/>
</dbReference>
<dbReference type="Gene3D" id="1.10.940.10">
    <property type="entry name" value="NusB-like"/>
    <property type="match status" value="1"/>
</dbReference>
<dbReference type="HAMAP" id="MF_00073">
    <property type="entry name" value="NusB"/>
    <property type="match status" value="1"/>
</dbReference>
<dbReference type="InterPro" id="IPR035926">
    <property type="entry name" value="NusB-like_sf"/>
</dbReference>
<dbReference type="InterPro" id="IPR011605">
    <property type="entry name" value="NusB_fam"/>
</dbReference>
<dbReference type="InterPro" id="IPR006027">
    <property type="entry name" value="NusB_RsmB_TIM44"/>
</dbReference>
<dbReference type="NCBIfam" id="TIGR01951">
    <property type="entry name" value="nusB"/>
    <property type="match status" value="1"/>
</dbReference>
<dbReference type="PANTHER" id="PTHR11078:SF3">
    <property type="entry name" value="ANTITERMINATION NUSB DOMAIN-CONTAINING PROTEIN"/>
    <property type="match status" value="1"/>
</dbReference>
<dbReference type="PANTHER" id="PTHR11078">
    <property type="entry name" value="N UTILIZATION SUBSTANCE PROTEIN B-RELATED"/>
    <property type="match status" value="1"/>
</dbReference>
<dbReference type="Pfam" id="PF01029">
    <property type="entry name" value="NusB"/>
    <property type="match status" value="1"/>
</dbReference>
<dbReference type="SUPFAM" id="SSF48013">
    <property type="entry name" value="NusB-like"/>
    <property type="match status" value="1"/>
</dbReference>
<protein>
    <recommendedName>
        <fullName evidence="1">Transcription antitermination protein NusB</fullName>
    </recommendedName>
    <alternativeName>
        <fullName evidence="1">Antitermination factor NusB</fullName>
    </alternativeName>
</protein>
<proteinExistence type="inferred from homology"/>
<comment type="function">
    <text evidence="1">Involved in transcription antitermination. Required for transcription of ribosomal RNA (rRNA) genes. Binds specifically to the boxA antiterminator sequence of the ribosomal RNA (rrn) operons.</text>
</comment>
<comment type="similarity">
    <text evidence="1">Belongs to the NusB family.</text>
</comment>
<reference key="1">
    <citation type="submission" date="2009-07" db="EMBL/GenBank/DDBJ databases">
        <title>Complete sequence of Geobacter sp. M21.</title>
        <authorList>
            <consortium name="US DOE Joint Genome Institute"/>
            <person name="Lucas S."/>
            <person name="Copeland A."/>
            <person name="Lapidus A."/>
            <person name="Glavina del Rio T."/>
            <person name="Dalin E."/>
            <person name="Tice H."/>
            <person name="Bruce D."/>
            <person name="Goodwin L."/>
            <person name="Pitluck S."/>
            <person name="Saunders E."/>
            <person name="Brettin T."/>
            <person name="Detter J.C."/>
            <person name="Han C."/>
            <person name="Larimer F."/>
            <person name="Land M."/>
            <person name="Hauser L."/>
            <person name="Kyrpides N."/>
            <person name="Ovchinnikova G."/>
            <person name="Lovley D."/>
        </authorList>
    </citation>
    <scope>NUCLEOTIDE SEQUENCE [LARGE SCALE GENOMIC DNA]</scope>
    <source>
        <strain>M21</strain>
    </source>
</reference>
<keyword id="KW-0694">RNA-binding</keyword>
<keyword id="KW-0804">Transcription</keyword>
<keyword id="KW-0889">Transcription antitermination</keyword>
<keyword id="KW-0805">Transcription regulation</keyword>
<organism>
    <name type="scientific">Geobacter sp. (strain M21)</name>
    <dbReference type="NCBI Taxonomy" id="443144"/>
    <lineage>
        <taxon>Bacteria</taxon>
        <taxon>Pseudomonadati</taxon>
        <taxon>Thermodesulfobacteriota</taxon>
        <taxon>Desulfuromonadia</taxon>
        <taxon>Geobacterales</taxon>
        <taxon>Geobacteraceae</taxon>
        <taxon>Geobacter</taxon>
    </lineage>
</organism>
<accession>C6E3M6</accession>